<comment type="function">
    <text>Intracellular transport of retinol.</text>
</comment>
<comment type="subcellular location">
    <subcellularLocation>
        <location>Cytoplasm</location>
    </subcellularLocation>
</comment>
<comment type="tissue specificity">
    <text>Expressed in prenatal liver, intestine and lung, and in adult intestine.</text>
</comment>
<comment type="domain">
    <text evidence="1">Forms a beta-barrel structure that accommodates hydrophobic ligands in its interior.</text>
</comment>
<comment type="similarity">
    <text evidence="3">Belongs to the calycin superfamily. Fatty-acid binding protein (FABP) family.</text>
</comment>
<name>RET2_MOUSE</name>
<reference key="1">
    <citation type="journal article" date="1994" name="J. Biol. Chem.">
        <title>The directly repeated RG(G/T)TCA motifs of the rat and mouse cellular retinol-binding protein II genes are promiscuous binding sites for RAR, RXR, HNF-4, and ARP-1 homo- and heterodimers.</title>
        <authorList>
            <person name="Nakshatri H."/>
            <person name="Chambon P."/>
        </authorList>
    </citation>
    <scope>NUCLEOTIDE SEQUENCE [MRNA]</scope>
    <source>
        <tissue>Intestine</tissue>
    </source>
</reference>
<reference key="2">
    <citation type="journal article" date="2005" name="Science">
        <title>The transcriptional landscape of the mammalian genome.</title>
        <authorList>
            <person name="Carninci P."/>
            <person name="Kasukawa T."/>
            <person name="Katayama S."/>
            <person name="Gough J."/>
            <person name="Frith M.C."/>
            <person name="Maeda N."/>
            <person name="Oyama R."/>
            <person name="Ravasi T."/>
            <person name="Lenhard B."/>
            <person name="Wells C."/>
            <person name="Kodzius R."/>
            <person name="Shimokawa K."/>
            <person name="Bajic V.B."/>
            <person name="Brenner S.E."/>
            <person name="Batalov S."/>
            <person name="Forrest A.R."/>
            <person name="Zavolan M."/>
            <person name="Davis M.J."/>
            <person name="Wilming L.G."/>
            <person name="Aidinis V."/>
            <person name="Allen J.E."/>
            <person name="Ambesi-Impiombato A."/>
            <person name="Apweiler R."/>
            <person name="Aturaliya R.N."/>
            <person name="Bailey T.L."/>
            <person name="Bansal M."/>
            <person name="Baxter L."/>
            <person name="Beisel K.W."/>
            <person name="Bersano T."/>
            <person name="Bono H."/>
            <person name="Chalk A.M."/>
            <person name="Chiu K.P."/>
            <person name="Choudhary V."/>
            <person name="Christoffels A."/>
            <person name="Clutterbuck D.R."/>
            <person name="Crowe M.L."/>
            <person name="Dalla E."/>
            <person name="Dalrymple B.P."/>
            <person name="de Bono B."/>
            <person name="Della Gatta G."/>
            <person name="di Bernardo D."/>
            <person name="Down T."/>
            <person name="Engstrom P."/>
            <person name="Fagiolini M."/>
            <person name="Faulkner G."/>
            <person name="Fletcher C.F."/>
            <person name="Fukushima T."/>
            <person name="Furuno M."/>
            <person name="Futaki S."/>
            <person name="Gariboldi M."/>
            <person name="Georgii-Hemming P."/>
            <person name="Gingeras T.R."/>
            <person name="Gojobori T."/>
            <person name="Green R.E."/>
            <person name="Gustincich S."/>
            <person name="Harbers M."/>
            <person name="Hayashi Y."/>
            <person name="Hensch T.K."/>
            <person name="Hirokawa N."/>
            <person name="Hill D."/>
            <person name="Huminiecki L."/>
            <person name="Iacono M."/>
            <person name="Ikeo K."/>
            <person name="Iwama A."/>
            <person name="Ishikawa T."/>
            <person name="Jakt M."/>
            <person name="Kanapin A."/>
            <person name="Katoh M."/>
            <person name="Kawasawa Y."/>
            <person name="Kelso J."/>
            <person name="Kitamura H."/>
            <person name="Kitano H."/>
            <person name="Kollias G."/>
            <person name="Krishnan S.P."/>
            <person name="Kruger A."/>
            <person name="Kummerfeld S.K."/>
            <person name="Kurochkin I.V."/>
            <person name="Lareau L.F."/>
            <person name="Lazarevic D."/>
            <person name="Lipovich L."/>
            <person name="Liu J."/>
            <person name="Liuni S."/>
            <person name="McWilliam S."/>
            <person name="Madan Babu M."/>
            <person name="Madera M."/>
            <person name="Marchionni L."/>
            <person name="Matsuda H."/>
            <person name="Matsuzawa S."/>
            <person name="Miki H."/>
            <person name="Mignone F."/>
            <person name="Miyake S."/>
            <person name="Morris K."/>
            <person name="Mottagui-Tabar S."/>
            <person name="Mulder N."/>
            <person name="Nakano N."/>
            <person name="Nakauchi H."/>
            <person name="Ng P."/>
            <person name="Nilsson R."/>
            <person name="Nishiguchi S."/>
            <person name="Nishikawa S."/>
            <person name="Nori F."/>
            <person name="Ohara O."/>
            <person name="Okazaki Y."/>
            <person name="Orlando V."/>
            <person name="Pang K.C."/>
            <person name="Pavan W.J."/>
            <person name="Pavesi G."/>
            <person name="Pesole G."/>
            <person name="Petrovsky N."/>
            <person name="Piazza S."/>
            <person name="Reed J."/>
            <person name="Reid J.F."/>
            <person name="Ring B.Z."/>
            <person name="Ringwald M."/>
            <person name="Rost B."/>
            <person name="Ruan Y."/>
            <person name="Salzberg S.L."/>
            <person name="Sandelin A."/>
            <person name="Schneider C."/>
            <person name="Schoenbach C."/>
            <person name="Sekiguchi K."/>
            <person name="Semple C.A."/>
            <person name="Seno S."/>
            <person name="Sessa L."/>
            <person name="Sheng Y."/>
            <person name="Shibata Y."/>
            <person name="Shimada H."/>
            <person name="Shimada K."/>
            <person name="Silva D."/>
            <person name="Sinclair B."/>
            <person name="Sperling S."/>
            <person name="Stupka E."/>
            <person name="Sugiura K."/>
            <person name="Sultana R."/>
            <person name="Takenaka Y."/>
            <person name="Taki K."/>
            <person name="Tammoja K."/>
            <person name="Tan S.L."/>
            <person name="Tang S."/>
            <person name="Taylor M.S."/>
            <person name="Tegner J."/>
            <person name="Teichmann S.A."/>
            <person name="Ueda H.R."/>
            <person name="van Nimwegen E."/>
            <person name="Verardo R."/>
            <person name="Wei C.L."/>
            <person name="Yagi K."/>
            <person name="Yamanishi H."/>
            <person name="Zabarovsky E."/>
            <person name="Zhu S."/>
            <person name="Zimmer A."/>
            <person name="Hide W."/>
            <person name="Bult C."/>
            <person name="Grimmond S.M."/>
            <person name="Teasdale R.D."/>
            <person name="Liu E.T."/>
            <person name="Brusic V."/>
            <person name="Quackenbush J."/>
            <person name="Wahlestedt C."/>
            <person name="Mattick J.S."/>
            <person name="Hume D.A."/>
            <person name="Kai C."/>
            <person name="Sasaki D."/>
            <person name="Tomaru Y."/>
            <person name="Fukuda S."/>
            <person name="Kanamori-Katayama M."/>
            <person name="Suzuki M."/>
            <person name="Aoki J."/>
            <person name="Arakawa T."/>
            <person name="Iida J."/>
            <person name="Imamura K."/>
            <person name="Itoh M."/>
            <person name="Kato T."/>
            <person name="Kawaji H."/>
            <person name="Kawagashira N."/>
            <person name="Kawashima T."/>
            <person name="Kojima M."/>
            <person name="Kondo S."/>
            <person name="Konno H."/>
            <person name="Nakano K."/>
            <person name="Ninomiya N."/>
            <person name="Nishio T."/>
            <person name="Okada M."/>
            <person name="Plessy C."/>
            <person name="Shibata K."/>
            <person name="Shiraki T."/>
            <person name="Suzuki S."/>
            <person name="Tagami M."/>
            <person name="Waki K."/>
            <person name="Watahiki A."/>
            <person name="Okamura-Oho Y."/>
            <person name="Suzuki H."/>
            <person name="Kawai J."/>
            <person name="Hayashizaki Y."/>
        </authorList>
    </citation>
    <scope>NUCLEOTIDE SEQUENCE [LARGE SCALE MRNA]</scope>
    <source>
        <strain>C57BL/6J</strain>
        <tissue>Embryo</tissue>
    </source>
</reference>
<gene>
    <name type="primary">Rbp2</name>
    <name type="synonym">Crbpii</name>
</gene>
<evidence type="ECO:0000250" key="1"/>
<evidence type="ECO:0000250" key="2">
    <source>
        <dbReference type="UniProtKB" id="P50120"/>
    </source>
</evidence>
<evidence type="ECO:0000305" key="3"/>
<protein>
    <recommendedName>
        <fullName>Retinol-binding protein 2</fullName>
    </recommendedName>
    <alternativeName>
        <fullName>Cellular retinol-binding protein II</fullName>
        <shortName>CRBP-II</shortName>
    </alternativeName>
</protein>
<accession>Q08652</accession>
<accession>Q9D1N1</accession>
<dbReference type="EMBL" id="X74154">
    <property type="protein sequence ID" value="CAA52268.1"/>
    <property type="molecule type" value="mRNA"/>
</dbReference>
<dbReference type="EMBL" id="AK003312">
    <property type="protein sequence ID" value="BAB22708.1"/>
    <property type="molecule type" value="mRNA"/>
</dbReference>
<dbReference type="CCDS" id="CCDS23425.1"/>
<dbReference type="PIR" id="I48311">
    <property type="entry name" value="S34717"/>
</dbReference>
<dbReference type="RefSeq" id="NP_033060.3">
    <property type="nucleotide sequence ID" value="NM_009034.4"/>
</dbReference>
<dbReference type="BMRB" id="Q08652"/>
<dbReference type="SMR" id="Q08652"/>
<dbReference type="BioGRID" id="202828">
    <property type="interactions" value="5"/>
</dbReference>
<dbReference type="FunCoup" id="Q08652">
    <property type="interactions" value="1130"/>
</dbReference>
<dbReference type="STRING" id="10090.ENSMUSP00000140676"/>
<dbReference type="PhosphoSitePlus" id="Q08652"/>
<dbReference type="PaxDb" id="10090-ENSMUSP00000140676"/>
<dbReference type="ProteomicsDB" id="253220"/>
<dbReference type="Antibodypedia" id="33461">
    <property type="antibodies" value="253 antibodies from 27 providers"/>
</dbReference>
<dbReference type="DNASU" id="19660"/>
<dbReference type="Ensembl" id="ENSMUST00000035029.3">
    <property type="protein sequence ID" value="ENSMUSP00000035029.3"/>
    <property type="gene ID" value="ENSMUSG00000032454.10"/>
</dbReference>
<dbReference type="Ensembl" id="ENSMUST00000187905.7">
    <property type="protein sequence ID" value="ENSMUSP00000140630.2"/>
    <property type="gene ID" value="ENSMUSG00000032454.10"/>
</dbReference>
<dbReference type="Ensembl" id="ENSMUST00000189446.7">
    <property type="protein sequence ID" value="ENSMUSP00000140676.2"/>
    <property type="gene ID" value="ENSMUSG00000032454.10"/>
</dbReference>
<dbReference type="GeneID" id="19660"/>
<dbReference type="KEGG" id="mmu:19660"/>
<dbReference type="UCSC" id="uc009rdk.2">
    <property type="organism name" value="mouse"/>
</dbReference>
<dbReference type="AGR" id="MGI:97877"/>
<dbReference type="CTD" id="5948"/>
<dbReference type="MGI" id="MGI:97877">
    <property type="gene designation" value="Rbp2"/>
</dbReference>
<dbReference type="VEuPathDB" id="HostDB:ENSMUSG00000032454"/>
<dbReference type="eggNOG" id="KOG4015">
    <property type="taxonomic scope" value="Eukaryota"/>
</dbReference>
<dbReference type="GeneTree" id="ENSGT00940000160165"/>
<dbReference type="HOGENOM" id="CLU_113772_5_1_1"/>
<dbReference type="InParanoid" id="Q08652"/>
<dbReference type="OMA" id="EFEECTK"/>
<dbReference type="OrthoDB" id="354351at2759"/>
<dbReference type="PhylomeDB" id="Q08652"/>
<dbReference type="TreeFam" id="TF316894"/>
<dbReference type="Reactome" id="R-MMU-975634">
    <property type="pathway name" value="Retinoid metabolism and transport"/>
</dbReference>
<dbReference type="BioGRID-ORCS" id="19660">
    <property type="hits" value="1 hit in 79 CRISPR screens"/>
</dbReference>
<dbReference type="PRO" id="PR:Q08652"/>
<dbReference type="Proteomes" id="UP000000589">
    <property type="component" value="Chromosome 9"/>
</dbReference>
<dbReference type="RNAct" id="Q08652">
    <property type="molecule type" value="protein"/>
</dbReference>
<dbReference type="Bgee" id="ENSMUSG00000032454">
    <property type="expression patterns" value="Expressed in small intestine Peyer's patch and 47 other cell types or tissues"/>
</dbReference>
<dbReference type="ExpressionAtlas" id="Q08652">
    <property type="expression patterns" value="baseline and differential"/>
</dbReference>
<dbReference type="GO" id="GO:0005829">
    <property type="term" value="C:cytosol"/>
    <property type="evidence" value="ECO:0000314"/>
    <property type="project" value="MGI"/>
</dbReference>
<dbReference type="GO" id="GO:0005488">
    <property type="term" value="F:binding"/>
    <property type="evidence" value="ECO:0000314"/>
    <property type="project" value="MGI"/>
</dbReference>
<dbReference type="GO" id="GO:0140767">
    <property type="term" value="F:enzyme-substrate adaptor activity"/>
    <property type="evidence" value="ECO:0000266"/>
    <property type="project" value="MGI"/>
</dbReference>
<dbReference type="GO" id="GO:0008289">
    <property type="term" value="F:lipid binding"/>
    <property type="evidence" value="ECO:0000314"/>
    <property type="project" value="MGI"/>
</dbReference>
<dbReference type="GO" id="GO:0140104">
    <property type="term" value="F:molecular carrier activity"/>
    <property type="evidence" value="ECO:0000315"/>
    <property type="project" value="MGI"/>
</dbReference>
<dbReference type="GO" id="GO:0016918">
    <property type="term" value="F:retinal binding"/>
    <property type="evidence" value="ECO:0007669"/>
    <property type="project" value="UniProtKB-KW"/>
</dbReference>
<dbReference type="GO" id="GO:0005501">
    <property type="term" value="F:retinoid binding"/>
    <property type="evidence" value="ECO:0000304"/>
    <property type="project" value="MGI"/>
</dbReference>
<dbReference type="GO" id="GO:0019841">
    <property type="term" value="F:retinol binding"/>
    <property type="evidence" value="ECO:0007669"/>
    <property type="project" value="UniProtKB-KW"/>
</dbReference>
<dbReference type="GO" id="GO:0001523">
    <property type="term" value="P:retinoid metabolic process"/>
    <property type="evidence" value="ECO:0000315"/>
    <property type="project" value="MGI"/>
</dbReference>
<dbReference type="CDD" id="cd19463">
    <property type="entry name" value="CRBP2"/>
    <property type="match status" value="1"/>
</dbReference>
<dbReference type="FunFam" id="2.40.128.20:FF:000001">
    <property type="entry name" value="Fatty acid-binding protein, adipocyte"/>
    <property type="match status" value="1"/>
</dbReference>
<dbReference type="Gene3D" id="2.40.128.20">
    <property type="match status" value="1"/>
</dbReference>
<dbReference type="InterPro" id="IPR012674">
    <property type="entry name" value="Calycin"/>
</dbReference>
<dbReference type="InterPro" id="IPR000463">
    <property type="entry name" value="Fatty_acid-bd"/>
</dbReference>
<dbReference type="InterPro" id="IPR031259">
    <property type="entry name" value="ILBP"/>
</dbReference>
<dbReference type="InterPro" id="IPR000566">
    <property type="entry name" value="Lipocln_cytosolic_FA-bd_dom"/>
</dbReference>
<dbReference type="PANTHER" id="PTHR11955">
    <property type="entry name" value="FATTY ACID BINDING PROTEIN"/>
    <property type="match status" value="1"/>
</dbReference>
<dbReference type="Pfam" id="PF00061">
    <property type="entry name" value="Lipocalin"/>
    <property type="match status" value="1"/>
</dbReference>
<dbReference type="PRINTS" id="PR00178">
    <property type="entry name" value="FATTYACIDBP"/>
</dbReference>
<dbReference type="SUPFAM" id="SSF50814">
    <property type="entry name" value="Lipocalins"/>
    <property type="match status" value="1"/>
</dbReference>
<dbReference type="PROSITE" id="PS00214">
    <property type="entry name" value="FABP"/>
    <property type="match status" value="1"/>
</dbReference>
<sequence>MTKDQNGTWEMESNENFEGYMKALDIDFATRKIAVRLTQTKIITQDGDNFKTKTNSTFRNYDLDFTVGVEFDEHTKGLDGRHVKTLVTWEGNTLVCVQKGEKENRGWKQWVEGDKLYLELTCGDQVCRQVFKKK</sequence>
<organism>
    <name type="scientific">Mus musculus</name>
    <name type="common">Mouse</name>
    <dbReference type="NCBI Taxonomy" id="10090"/>
    <lineage>
        <taxon>Eukaryota</taxon>
        <taxon>Metazoa</taxon>
        <taxon>Chordata</taxon>
        <taxon>Craniata</taxon>
        <taxon>Vertebrata</taxon>
        <taxon>Euteleostomi</taxon>
        <taxon>Mammalia</taxon>
        <taxon>Eutheria</taxon>
        <taxon>Euarchontoglires</taxon>
        <taxon>Glires</taxon>
        <taxon>Rodentia</taxon>
        <taxon>Myomorpha</taxon>
        <taxon>Muroidea</taxon>
        <taxon>Muridae</taxon>
        <taxon>Murinae</taxon>
        <taxon>Mus</taxon>
        <taxon>Mus</taxon>
    </lineage>
</organism>
<feature type="chain" id="PRO_0000067396" description="Retinol-binding protein 2">
    <location>
        <begin position="1"/>
        <end position="134"/>
    </location>
</feature>
<feature type="binding site" evidence="2">
    <location>
        <position position="41"/>
    </location>
    <ligand>
        <name>all-trans-retinol</name>
        <dbReference type="ChEBI" id="CHEBI:17336"/>
    </ligand>
</feature>
<feature type="binding site" evidence="2">
    <location>
        <position position="109"/>
    </location>
    <ligand>
        <name>all-trans-retinol</name>
        <dbReference type="ChEBI" id="CHEBI:17336"/>
    </ligand>
</feature>
<feature type="sequence conflict" description="In Ref. 2; BAB22708." evidence="3" ref="2">
    <original>Q</original>
    <variation>H</variation>
    <location>
        <position position="98"/>
    </location>
</feature>
<keyword id="KW-0963">Cytoplasm</keyword>
<keyword id="KW-1185">Reference proteome</keyword>
<keyword id="KW-0683">Retinol-binding</keyword>
<keyword id="KW-0813">Transport</keyword>
<keyword id="KW-0845">Vitamin A</keyword>
<proteinExistence type="evidence at transcript level"/>